<evidence type="ECO:0000255" key="1">
    <source>
        <dbReference type="HAMAP-Rule" id="MF_00172"/>
    </source>
</evidence>
<dbReference type="EC" id="2.1.1.14" evidence="1"/>
<dbReference type="EMBL" id="CP000949">
    <property type="protein sequence ID" value="ACA71307.1"/>
    <property type="molecule type" value="Genomic_DNA"/>
</dbReference>
<dbReference type="SMR" id="B1J2V4"/>
<dbReference type="STRING" id="390235.PputW619_0802"/>
<dbReference type="KEGG" id="ppw:PputW619_0802"/>
<dbReference type="eggNOG" id="COG0620">
    <property type="taxonomic scope" value="Bacteria"/>
</dbReference>
<dbReference type="HOGENOM" id="CLU_013175_0_0_6"/>
<dbReference type="OrthoDB" id="244285at2"/>
<dbReference type="UniPathway" id="UPA00051">
    <property type="reaction ID" value="UER00082"/>
</dbReference>
<dbReference type="GO" id="GO:0003871">
    <property type="term" value="F:5-methyltetrahydropteroyltriglutamate-homocysteine S-methyltransferase activity"/>
    <property type="evidence" value="ECO:0007669"/>
    <property type="project" value="UniProtKB-UniRule"/>
</dbReference>
<dbReference type="GO" id="GO:0008270">
    <property type="term" value="F:zinc ion binding"/>
    <property type="evidence" value="ECO:0007669"/>
    <property type="project" value="InterPro"/>
</dbReference>
<dbReference type="GO" id="GO:0009086">
    <property type="term" value="P:methionine biosynthetic process"/>
    <property type="evidence" value="ECO:0007669"/>
    <property type="project" value="UniProtKB-UniRule"/>
</dbReference>
<dbReference type="GO" id="GO:0032259">
    <property type="term" value="P:methylation"/>
    <property type="evidence" value="ECO:0007669"/>
    <property type="project" value="UniProtKB-KW"/>
</dbReference>
<dbReference type="CDD" id="cd03311">
    <property type="entry name" value="CIMS_C_terminal_like"/>
    <property type="match status" value="1"/>
</dbReference>
<dbReference type="CDD" id="cd03312">
    <property type="entry name" value="CIMS_N_terminal_like"/>
    <property type="match status" value="1"/>
</dbReference>
<dbReference type="FunFam" id="3.20.20.210:FF:000002">
    <property type="entry name" value="5-methyltetrahydropteroyltriglutamate--homocysteine methyltransferase"/>
    <property type="match status" value="1"/>
</dbReference>
<dbReference type="FunFam" id="3.20.20.210:FF:000003">
    <property type="entry name" value="5-methyltetrahydropteroyltriglutamate--homocysteine methyltransferase"/>
    <property type="match status" value="1"/>
</dbReference>
<dbReference type="Gene3D" id="3.20.20.210">
    <property type="match status" value="2"/>
</dbReference>
<dbReference type="HAMAP" id="MF_00172">
    <property type="entry name" value="Meth_synth"/>
    <property type="match status" value="1"/>
</dbReference>
<dbReference type="InterPro" id="IPR013215">
    <property type="entry name" value="Cbl-indep_Met_Synth_N"/>
</dbReference>
<dbReference type="InterPro" id="IPR006276">
    <property type="entry name" value="Cobalamin-indep_Met_synthase"/>
</dbReference>
<dbReference type="InterPro" id="IPR002629">
    <property type="entry name" value="Met_Synth_C/arc"/>
</dbReference>
<dbReference type="InterPro" id="IPR038071">
    <property type="entry name" value="UROD/MetE-like_sf"/>
</dbReference>
<dbReference type="NCBIfam" id="TIGR01371">
    <property type="entry name" value="met_syn_B12ind"/>
    <property type="match status" value="1"/>
</dbReference>
<dbReference type="NCBIfam" id="NF003556">
    <property type="entry name" value="PRK05222.1"/>
    <property type="match status" value="1"/>
</dbReference>
<dbReference type="PANTHER" id="PTHR30519">
    <property type="entry name" value="5-METHYLTETRAHYDROPTEROYLTRIGLUTAMATE--HOMOCYSTEINE METHYLTRANSFERASE"/>
    <property type="match status" value="1"/>
</dbReference>
<dbReference type="Pfam" id="PF08267">
    <property type="entry name" value="Meth_synt_1"/>
    <property type="match status" value="1"/>
</dbReference>
<dbReference type="Pfam" id="PF01717">
    <property type="entry name" value="Meth_synt_2"/>
    <property type="match status" value="1"/>
</dbReference>
<dbReference type="PIRSF" id="PIRSF000382">
    <property type="entry name" value="MeTrfase_B12_ind"/>
    <property type="match status" value="1"/>
</dbReference>
<dbReference type="SUPFAM" id="SSF51726">
    <property type="entry name" value="UROD/MetE-like"/>
    <property type="match status" value="2"/>
</dbReference>
<organism>
    <name type="scientific">Pseudomonas putida (strain W619)</name>
    <dbReference type="NCBI Taxonomy" id="390235"/>
    <lineage>
        <taxon>Bacteria</taxon>
        <taxon>Pseudomonadati</taxon>
        <taxon>Pseudomonadota</taxon>
        <taxon>Gammaproteobacteria</taxon>
        <taxon>Pseudomonadales</taxon>
        <taxon>Pseudomonadaceae</taxon>
        <taxon>Pseudomonas</taxon>
    </lineage>
</organism>
<sequence length="766" mass="85725">MALAHNLGFPRIGRDRELKKAQEAFWKGELDEAGLRKVGRDLRAAHWQAQKDAGIELLPVGDFAWYDQVLTHSLTFGVIPERFRGHDGAKPTLQTLFAMARGVATGRSANCCGGAHAQEMTKWFDTNYHYLVPEFTVDQQFALSWEQLFEEVDEAKALGHAAKPVVIGPLTYLWLGKAKGGDFDKLELLDRLLPVYDEILNRLAGQGVEWVQIDEPILVLDLPQEWKNAYERVYNILQRAPLKKLVATYFGGLEENLGLAANLPVDGLHIDLVRAPEQYPTILDRLPAYKILSLGLVNGRNVWACDLEKAVDVLRHAAERLGDRLWVAPSCSLLHSPVDLGREDQLDTELKSWLAFAVQKCQEVAVLAKAVNQPDAAEVAAALARSRAIQAGRASSPRIHKPAVQARVHAIKPGDSQRQSAFGQRIAKQRAGLNLPAYPTTTIGSFPQTPAIRLARQAFKQGKLTEADYVEAMHSEIRHAVQIQENLGLDVLVHGEAERNDMVEYFAEQLDGYVFTRFGWVQSYGSRCVKPAVIYGDLSRPEAMTVAWIRYAQGLTRKVMKGMLTGPVTMLMWSFPREDVSRETQARQLALAIRDEVLDLEAADIKIVQIDEAAFREGLPLRRSAWPAYLEWATEAFRLCASGVRDETQIHTHMCYSEFNDVIESIAAMDADVITIETSRSDMELLEAFEKFDYPNEIGPGVYDIHSPRVPSREEMVKLLRKAALRIPAERLWVNPDCGLKTRAWPETEAALVNMVAAARELRATA</sequence>
<proteinExistence type="inferred from homology"/>
<keyword id="KW-0028">Amino-acid biosynthesis</keyword>
<keyword id="KW-0479">Metal-binding</keyword>
<keyword id="KW-0486">Methionine biosynthesis</keyword>
<keyword id="KW-0489">Methyltransferase</keyword>
<keyword id="KW-0677">Repeat</keyword>
<keyword id="KW-0808">Transferase</keyword>
<keyword id="KW-0862">Zinc</keyword>
<accession>B1J2V4</accession>
<comment type="function">
    <text evidence="1">Catalyzes the transfer of a methyl group from 5-methyltetrahydrofolate to homocysteine resulting in methionine formation.</text>
</comment>
<comment type="catalytic activity">
    <reaction evidence="1">
        <text>5-methyltetrahydropteroyltri-L-glutamate + L-homocysteine = tetrahydropteroyltri-L-glutamate + L-methionine</text>
        <dbReference type="Rhea" id="RHEA:21196"/>
        <dbReference type="ChEBI" id="CHEBI:57844"/>
        <dbReference type="ChEBI" id="CHEBI:58140"/>
        <dbReference type="ChEBI" id="CHEBI:58199"/>
        <dbReference type="ChEBI" id="CHEBI:58207"/>
        <dbReference type="EC" id="2.1.1.14"/>
    </reaction>
</comment>
<comment type="cofactor">
    <cofactor evidence="1">
        <name>Zn(2+)</name>
        <dbReference type="ChEBI" id="CHEBI:29105"/>
    </cofactor>
    <text evidence="1">Binds 1 zinc ion per subunit.</text>
</comment>
<comment type="pathway">
    <text evidence="1">Amino-acid biosynthesis; L-methionine biosynthesis via de novo pathway; L-methionine from L-homocysteine (MetE route): step 1/1.</text>
</comment>
<comment type="similarity">
    <text evidence="1">Belongs to the vitamin-B12 independent methionine synthase family.</text>
</comment>
<name>METE_PSEPW</name>
<feature type="chain" id="PRO_1000097833" description="5-methyltetrahydropteroyltriglutamate--homocysteine methyltransferase">
    <location>
        <begin position="1"/>
        <end position="766"/>
    </location>
</feature>
<feature type="active site" description="Proton donor" evidence="1">
    <location>
        <position position="706"/>
    </location>
</feature>
<feature type="binding site" evidence="1">
    <location>
        <begin position="16"/>
        <end position="19"/>
    </location>
    <ligand>
        <name>5-methyltetrahydropteroyltri-L-glutamate</name>
        <dbReference type="ChEBI" id="CHEBI:58207"/>
    </ligand>
</feature>
<feature type="binding site" evidence="1">
    <location>
        <position position="122"/>
    </location>
    <ligand>
        <name>5-methyltetrahydropteroyltri-L-glutamate</name>
        <dbReference type="ChEBI" id="CHEBI:58207"/>
    </ligand>
</feature>
<feature type="binding site" evidence="1">
    <location>
        <begin position="443"/>
        <end position="445"/>
    </location>
    <ligand>
        <name>L-homocysteine</name>
        <dbReference type="ChEBI" id="CHEBI:58199"/>
    </ligand>
</feature>
<feature type="binding site" evidence="1">
    <location>
        <begin position="443"/>
        <end position="445"/>
    </location>
    <ligand>
        <name>L-methionine</name>
        <dbReference type="ChEBI" id="CHEBI:57844"/>
    </ligand>
</feature>
<feature type="binding site" evidence="1">
    <location>
        <position position="496"/>
    </location>
    <ligand>
        <name>L-homocysteine</name>
        <dbReference type="ChEBI" id="CHEBI:58199"/>
    </ligand>
</feature>
<feature type="binding site" evidence="1">
    <location>
        <position position="496"/>
    </location>
    <ligand>
        <name>L-methionine</name>
        <dbReference type="ChEBI" id="CHEBI:57844"/>
    </ligand>
</feature>
<feature type="binding site" evidence="1">
    <location>
        <begin position="527"/>
        <end position="528"/>
    </location>
    <ligand>
        <name>5-methyltetrahydropteroyltri-L-glutamate</name>
        <dbReference type="ChEBI" id="CHEBI:58207"/>
    </ligand>
</feature>
<feature type="binding site" evidence="1">
    <location>
        <position position="573"/>
    </location>
    <ligand>
        <name>5-methyltetrahydropteroyltri-L-glutamate</name>
        <dbReference type="ChEBI" id="CHEBI:58207"/>
    </ligand>
</feature>
<feature type="binding site" evidence="1">
    <location>
        <position position="611"/>
    </location>
    <ligand>
        <name>L-homocysteine</name>
        <dbReference type="ChEBI" id="CHEBI:58199"/>
    </ligand>
</feature>
<feature type="binding site" evidence="1">
    <location>
        <position position="611"/>
    </location>
    <ligand>
        <name>L-methionine</name>
        <dbReference type="ChEBI" id="CHEBI:57844"/>
    </ligand>
</feature>
<feature type="binding site" evidence="1">
    <location>
        <position position="617"/>
    </location>
    <ligand>
        <name>5-methyltetrahydropteroyltri-L-glutamate</name>
        <dbReference type="ChEBI" id="CHEBI:58207"/>
    </ligand>
</feature>
<feature type="binding site" evidence="1">
    <location>
        <position position="653"/>
    </location>
    <ligand>
        <name>Zn(2+)</name>
        <dbReference type="ChEBI" id="CHEBI:29105"/>
        <note>catalytic</note>
    </ligand>
</feature>
<feature type="binding site" evidence="1">
    <location>
        <position position="655"/>
    </location>
    <ligand>
        <name>Zn(2+)</name>
        <dbReference type="ChEBI" id="CHEBI:29105"/>
        <note>catalytic</note>
    </ligand>
</feature>
<feature type="binding site" evidence="1">
    <location>
        <position position="677"/>
    </location>
    <ligand>
        <name>Zn(2+)</name>
        <dbReference type="ChEBI" id="CHEBI:29105"/>
        <note>catalytic</note>
    </ligand>
</feature>
<feature type="binding site" evidence="1">
    <location>
        <position position="738"/>
    </location>
    <ligand>
        <name>Zn(2+)</name>
        <dbReference type="ChEBI" id="CHEBI:29105"/>
        <note>catalytic</note>
    </ligand>
</feature>
<gene>
    <name evidence="1" type="primary">metE</name>
    <name type="ordered locus">PputW619_0802</name>
</gene>
<protein>
    <recommendedName>
        <fullName evidence="1">5-methyltetrahydropteroyltriglutamate--homocysteine methyltransferase</fullName>
        <ecNumber evidence="1">2.1.1.14</ecNumber>
    </recommendedName>
    <alternativeName>
        <fullName evidence="1">Cobalamin-independent methionine synthase</fullName>
    </alternativeName>
    <alternativeName>
        <fullName evidence="1">Methionine synthase, vitamin-B12 independent isozyme</fullName>
    </alternativeName>
</protein>
<reference key="1">
    <citation type="submission" date="2008-02" db="EMBL/GenBank/DDBJ databases">
        <title>Complete sequence of Pseudomonas putida W619.</title>
        <authorList>
            <person name="Copeland A."/>
            <person name="Lucas S."/>
            <person name="Lapidus A."/>
            <person name="Barry K."/>
            <person name="Detter J.C."/>
            <person name="Glavina del Rio T."/>
            <person name="Dalin E."/>
            <person name="Tice H."/>
            <person name="Pitluck S."/>
            <person name="Chain P."/>
            <person name="Malfatti S."/>
            <person name="Shin M."/>
            <person name="Vergez L."/>
            <person name="Schmutz J."/>
            <person name="Larimer F."/>
            <person name="Land M."/>
            <person name="Hauser L."/>
            <person name="Kyrpides N."/>
            <person name="Kim E."/>
            <person name="Taghavi S."/>
            <person name="Vangronsveld D."/>
            <person name="van der Lelie D."/>
            <person name="Richardson P."/>
        </authorList>
    </citation>
    <scope>NUCLEOTIDE SEQUENCE [LARGE SCALE GENOMIC DNA]</scope>
    <source>
        <strain>W619</strain>
    </source>
</reference>